<name>ZBT8A_BOVIN</name>
<protein>
    <recommendedName>
        <fullName>Zinc finger and BTB domain-containing protein 8A</fullName>
    </recommendedName>
</protein>
<feature type="chain" id="PRO_0000378507" description="Zinc finger and BTB domain-containing protein 8A">
    <location>
        <begin position="1"/>
        <end position="441"/>
    </location>
</feature>
<feature type="domain" description="BTB" evidence="2">
    <location>
        <begin position="24"/>
        <end position="92"/>
    </location>
</feature>
<feature type="zinc finger region" description="C2H2-type 1" evidence="3">
    <location>
        <begin position="282"/>
        <end position="304"/>
    </location>
</feature>
<feature type="zinc finger region" description="C2H2-type 2" evidence="3">
    <location>
        <begin position="310"/>
        <end position="333"/>
    </location>
</feature>
<feature type="region of interest" description="Disordered" evidence="4">
    <location>
        <begin position="146"/>
        <end position="252"/>
    </location>
</feature>
<feature type="compositionally biased region" description="Polar residues" evidence="4">
    <location>
        <begin position="146"/>
        <end position="170"/>
    </location>
</feature>
<feature type="compositionally biased region" description="Polar residues" evidence="4">
    <location>
        <begin position="178"/>
        <end position="197"/>
    </location>
</feature>
<feature type="compositionally biased region" description="Basic and acidic residues" evidence="4">
    <location>
        <begin position="198"/>
        <end position="208"/>
    </location>
</feature>
<feature type="compositionally biased region" description="Low complexity" evidence="4">
    <location>
        <begin position="234"/>
        <end position="248"/>
    </location>
</feature>
<feature type="modified residue" description="Phosphoserine" evidence="1">
    <location>
        <position position="161"/>
    </location>
</feature>
<feature type="modified residue" description="Phosphoserine" evidence="1">
    <location>
        <position position="167"/>
    </location>
</feature>
<feature type="cross-link" description="Glycyl lysine isopeptide (Lys-Gly) (interchain with G-Cter in SUMO2)" evidence="1">
    <location>
        <position position="178"/>
    </location>
</feature>
<feature type="cross-link" description="Glycyl lysine isopeptide (Lys-Gly) (interchain with G-Cter in SUMO2)" evidence="1">
    <location>
        <position position="182"/>
    </location>
</feature>
<feature type="cross-link" description="Glycyl lysine isopeptide (Lys-Gly) (interchain with G-Cter in SUMO2)" evidence="1">
    <location>
        <position position="199"/>
    </location>
</feature>
<feature type="cross-link" description="Glycyl lysine isopeptide (Lys-Gly) (interchain with G-Cter in SUMO2)" evidence="1">
    <location>
        <position position="437"/>
    </location>
</feature>
<accession>Q0VCJ6</accession>
<proteinExistence type="evidence at transcript level"/>
<comment type="function">
    <text>May be involved in transcriptional regulation.</text>
</comment>
<comment type="subcellular location">
    <subcellularLocation>
        <location evidence="5">Nucleus</location>
    </subcellularLocation>
</comment>
<keyword id="KW-0238">DNA-binding</keyword>
<keyword id="KW-1017">Isopeptide bond</keyword>
<keyword id="KW-0479">Metal-binding</keyword>
<keyword id="KW-0539">Nucleus</keyword>
<keyword id="KW-0597">Phosphoprotein</keyword>
<keyword id="KW-1185">Reference proteome</keyword>
<keyword id="KW-0677">Repeat</keyword>
<keyword id="KW-0804">Transcription</keyword>
<keyword id="KW-0805">Transcription regulation</keyword>
<keyword id="KW-0832">Ubl conjugation</keyword>
<keyword id="KW-0862">Zinc</keyword>
<keyword id="KW-0863">Zinc-finger</keyword>
<reference key="1">
    <citation type="submission" date="2006-08" db="EMBL/GenBank/DDBJ databases">
        <authorList>
            <consortium name="NIH - Mammalian Gene Collection (MGC) project"/>
        </authorList>
    </citation>
    <scope>NUCLEOTIDE SEQUENCE [LARGE SCALE MRNA]</scope>
    <source>
        <strain>Hereford</strain>
        <tissue>Fetal pons</tissue>
    </source>
</reference>
<evidence type="ECO:0000250" key="1">
    <source>
        <dbReference type="UniProtKB" id="Q96BR9"/>
    </source>
</evidence>
<evidence type="ECO:0000255" key="2">
    <source>
        <dbReference type="PROSITE-ProRule" id="PRU00037"/>
    </source>
</evidence>
<evidence type="ECO:0000255" key="3">
    <source>
        <dbReference type="PROSITE-ProRule" id="PRU00042"/>
    </source>
</evidence>
<evidence type="ECO:0000256" key="4">
    <source>
        <dbReference type="SAM" id="MobiDB-lite"/>
    </source>
</evidence>
<evidence type="ECO:0000305" key="5"/>
<gene>
    <name type="primary">ZBTB8A</name>
</gene>
<organism>
    <name type="scientific">Bos taurus</name>
    <name type="common">Bovine</name>
    <dbReference type="NCBI Taxonomy" id="9913"/>
    <lineage>
        <taxon>Eukaryota</taxon>
        <taxon>Metazoa</taxon>
        <taxon>Chordata</taxon>
        <taxon>Craniata</taxon>
        <taxon>Vertebrata</taxon>
        <taxon>Euteleostomi</taxon>
        <taxon>Mammalia</taxon>
        <taxon>Eutheria</taxon>
        <taxon>Laurasiatheria</taxon>
        <taxon>Artiodactyla</taxon>
        <taxon>Ruminantia</taxon>
        <taxon>Pecora</taxon>
        <taxon>Bovidae</taxon>
        <taxon>Bovinae</taxon>
        <taxon>Bos</taxon>
    </lineage>
</organism>
<sequence>MEISSHQSHLLQQLNEQRRQDVFCDCSILVEGKVFKAHRNVLFASSGYFKMLLSQNSKETSQPTTATFQAFSPDTFTVILDFVYSGKLSLTGQNVIEVMSAASFLQMTDVISVCKTFIKSSLDISEKEKDRYFSLSDKDANSNGIERSSFYSSGWQDESSSPRSHLSPDQGTGIISGKSWSKYNYHPASQRNTQQPLTKHEQRKDSIKKAKHLRLSQPSEMTHYKSSKREARTSDSSSHASQSEEQAQMNAEMDSTPVSYQYGQGSDVTSRSFPDDLPRMRFKCPYCTHVVKRKADLKRHLRCHTGERPYPCQACGKRFSRLDHLSSHFRTIHQACKLICRKCKRHVTGLTGQVVQEGTRRYRLCNECLAEVGIDSLPIDLEAEQHLMSPSDGDKDSRWHMGEDENRSYVEIVEDGSADLVIQQVDDSEEEEEKEIKPNIR</sequence>
<dbReference type="EMBL" id="BC120135">
    <property type="protein sequence ID" value="AAI20136.1"/>
    <property type="molecule type" value="mRNA"/>
</dbReference>
<dbReference type="RefSeq" id="NP_001069732.1">
    <property type="nucleotide sequence ID" value="NM_001076264.2"/>
</dbReference>
<dbReference type="SMR" id="Q0VCJ6"/>
<dbReference type="FunCoup" id="Q0VCJ6">
    <property type="interactions" value="218"/>
</dbReference>
<dbReference type="STRING" id="9913.ENSBTAP00000068941"/>
<dbReference type="PaxDb" id="9913-ENSBTAP00000056325"/>
<dbReference type="GeneID" id="541221"/>
<dbReference type="KEGG" id="bta:541221"/>
<dbReference type="CTD" id="653121"/>
<dbReference type="eggNOG" id="KOG1721">
    <property type="taxonomic scope" value="Eukaryota"/>
</dbReference>
<dbReference type="InParanoid" id="Q0VCJ6"/>
<dbReference type="OrthoDB" id="624345at2759"/>
<dbReference type="Proteomes" id="UP000009136">
    <property type="component" value="Unplaced"/>
</dbReference>
<dbReference type="GO" id="GO:0005634">
    <property type="term" value="C:nucleus"/>
    <property type="evidence" value="ECO:0007669"/>
    <property type="project" value="UniProtKB-SubCell"/>
</dbReference>
<dbReference type="GO" id="GO:0000981">
    <property type="term" value="F:DNA-binding transcription factor activity, RNA polymerase II-specific"/>
    <property type="evidence" value="ECO:0000318"/>
    <property type="project" value="GO_Central"/>
</dbReference>
<dbReference type="GO" id="GO:0000978">
    <property type="term" value="F:RNA polymerase II cis-regulatory region sequence-specific DNA binding"/>
    <property type="evidence" value="ECO:0000318"/>
    <property type="project" value="GO_Central"/>
</dbReference>
<dbReference type="GO" id="GO:0008270">
    <property type="term" value="F:zinc ion binding"/>
    <property type="evidence" value="ECO:0007669"/>
    <property type="project" value="UniProtKB-KW"/>
</dbReference>
<dbReference type="GO" id="GO:0006357">
    <property type="term" value="P:regulation of transcription by RNA polymerase II"/>
    <property type="evidence" value="ECO:0000318"/>
    <property type="project" value="GO_Central"/>
</dbReference>
<dbReference type="CDD" id="cd18329">
    <property type="entry name" value="BTB_POZ_ZBTB8A_BOZF1"/>
    <property type="match status" value="1"/>
</dbReference>
<dbReference type="FunFam" id="3.30.160.60:FF:000218">
    <property type="entry name" value="Zinc finger protein 10"/>
    <property type="match status" value="1"/>
</dbReference>
<dbReference type="Gene3D" id="3.30.160.60">
    <property type="entry name" value="Classic Zinc Finger"/>
    <property type="match status" value="2"/>
</dbReference>
<dbReference type="Gene3D" id="3.30.710.10">
    <property type="entry name" value="Potassium Channel Kv1.1, Chain A"/>
    <property type="match status" value="1"/>
</dbReference>
<dbReference type="InterPro" id="IPR000210">
    <property type="entry name" value="BTB/POZ_dom"/>
</dbReference>
<dbReference type="InterPro" id="IPR011333">
    <property type="entry name" value="SKP1/BTB/POZ_sf"/>
</dbReference>
<dbReference type="InterPro" id="IPR036236">
    <property type="entry name" value="Znf_C2H2_sf"/>
</dbReference>
<dbReference type="InterPro" id="IPR013087">
    <property type="entry name" value="Znf_C2H2_type"/>
</dbReference>
<dbReference type="InterPro" id="IPR050457">
    <property type="entry name" value="ZnFinger_BTB_dom_contain"/>
</dbReference>
<dbReference type="PANTHER" id="PTHR46105">
    <property type="entry name" value="AGAP004733-PA"/>
    <property type="match status" value="1"/>
</dbReference>
<dbReference type="PANTHER" id="PTHR46105:SF12">
    <property type="entry name" value="ZINC FINGER AND BTB DOMAIN-CONTAINING PROTEIN 8A"/>
    <property type="match status" value="1"/>
</dbReference>
<dbReference type="Pfam" id="PF00651">
    <property type="entry name" value="BTB"/>
    <property type="match status" value="1"/>
</dbReference>
<dbReference type="Pfam" id="PF00096">
    <property type="entry name" value="zf-C2H2"/>
    <property type="match status" value="2"/>
</dbReference>
<dbReference type="SMART" id="SM00225">
    <property type="entry name" value="BTB"/>
    <property type="match status" value="1"/>
</dbReference>
<dbReference type="SMART" id="SM00355">
    <property type="entry name" value="ZnF_C2H2"/>
    <property type="match status" value="2"/>
</dbReference>
<dbReference type="SUPFAM" id="SSF57667">
    <property type="entry name" value="beta-beta-alpha zinc fingers"/>
    <property type="match status" value="1"/>
</dbReference>
<dbReference type="SUPFAM" id="SSF54695">
    <property type="entry name" value="POZ domain"/>
    <property type="match status" value="1"/>
</dbReference>
<dbReference type="PROSITE" id="PS50097">
    <property type="entry name" value="BTB"/>
    <property type="match status" value="1"/>
</dbReference>
<dbReference type="PROSITE" id="PS00028">
    <property type="entry name" value="ZINC_FINGER_C2H2_1"/>
    <property type="match status" value="2"/>
</dbReference>
<dbReference type="PROSITE" id="PS50157">
    <property type="entry name" value="ZINC_FINGER_C2H2_2"/>
    <property type="match status" value="2"/>
</dbReference>